<gene>
    <name type="primary">flaB2</name>
    <name type="ordered locus">MJ0892</name>
</gene>
<comment type="function">
    <text>Flagellin is the subunit protein which polymerizes to form the filaments of archaeal flagella.</text>
</comment>
<comment type="subcellular location">
    <subcellularLocation>
        <location>Archaeal flagellum</location>
    </subcellularLocation>
</comment>
<comment type="similarity">
    <text evidence="2">Belongs to the archaeal flagellin family.</text>
</comment>
<protein>
    <recommendedName>
        <fullName>Flagellin B2</fullName>
    </recommendedName>
</protein>
<name>FLAB2_METJA</name>
<evidence type="ECO:0000250" key="1"/>
<evidence type="ECO:0000305" key="2"/>
<accession>Q58302</accession>
<keyword id="KW-0974">Archaeal flagellum</keyword>
<keyword id="KW-1185">Reference proteome</keyword>
<reference key="1">
    <citation type="journal article" date="1996" name="Science">
        <title>Complete genome sequence of the methanogenic archaeon, Methanococcus jannaschii.</title>
        <authorList>
            <person name="Bult C.J."/>
            <person name="White O."/>
            <person name="Olsen G.J."/>
            <person name="Zhou L."/>
            <person name="Fleischmann R.D."/>
            <person name="Sutton G.G."/>
            <person name="Blake J.A."/>
            <person name="FitzGerald L.M."/>
            <person name="Clayton R.A."/>
            <person name="Gocayne J.D."/>
            <person name="Kerlavage A.R."/>
            <person name="Dougherty B.A."/>
            <person name="Tomb J.-F."/>
            <person name="Adams M.D."/>
            <person name="Reich C.I."/>
            <person name="Overbeek R."/>
            <person name="Kirkness E.F."/>
            <person name="Weinstock K.G."/>
            <person name="Merrick J.M."/>
            <person name="Glodek A."/>
            <person name="Scott J.L."/>
            <person name="Geoghagen N.S.M."/>
            <person name="Weidman J.F."/>
            <person name="Fuhrmann J.L."/>
            <person name="Nguyen D."/>
            <person name="Utterback T.R."/>
            <person name="Kelley J.M."/>
            <person name="Peterson J.D."/>
            <person name="Sadow P.W."/>
            <person name="Hanna M.C."/>
            <person name="Cotton M.D."/>
            <person name="Roberts K.M."/>
            <person name="Hurst M.A."/>
            <person name="Kaine B.P."/>
            <person name="Borodovsky M."/>
            <person name="Klenk H.-P."/>
            <person name="Fraser C.M."/>
            <person name="Smith H.O."/>
            <person name="Woese C.R."/>
            <person name="Venter J.C."/>
        </authorList>
    </citation>
    <scope>NUCLEOTIDE SEQUENCE [LARGE SCALE GENOMIC DNA]</scope>
    <source>
        <strain>ATCC 43067 / DSM 2661 / JAL-1 / JCM 10045 / NBRC 100440</strain>
    </source>
</reference>
<feature type="propeptide" id="PRO_0000009375" evidence="1">
    <location>
        <begin position="1"/>
        <end position="12"/>
    </location>
</feature>
<feature type="chain" id="PRO_0000009376" description="Flagellin B2">
    <location>
        <begin position="13"/>
        <end position="217"/>
    </location>
</feature>
<organism>
    <name type="scientific">Methanocaldococcus jannaschii (strain ATCC 43067 / DSM 2661 / JAL-1 / JCM 10045 / NBRC 100440)</name>
    <name type="common">Methanococcus jannaschii</name>
    <dbReference type="NCBI Taxonomy" id="243232"/>
    <lineage>
        <taxon>Archaea</taxon>
        <taxon>Methanobacteriati</taxon>
        <taxon>Methanobacteriota</taxon>
        <taxon>Methanomada group</taxon>
        <taxon>Methanococci</taxon>
        <taxon>Methanococcales</taxon>
        <taxon>Methanocaldococcaceae</taxon>
        <taxon>Methanocaldococcus</taxon>
    </lineage>
</organism>
<proteinExistence type="inferred from homology"/>
<sequence>MKVFEFLKGKRGAMGIGTLIIFIAMVLVAAVAAAVLINTSGFLQQKAMATGKESTEQVASGLSTLQVIGIHDNKAINYLAIYITPNAGSAAIDLNQTKILITDGEKKAVLRYNSNAYADLTTGGEVTNTSLAAWNLSGGEFGIIVLQDADGSCKSTTPVINKGDIVALTINASAVGLNLVPRTTVTGSVIPEFGAPAVIEFTTPAAYLSTQEVIQLQ</sequence>
<dbReference type="EMBL" id="L77117">
    <property type="protein sequence ID" value="AAB98895.1"/>
    <property type="molecule type" value="Genomic_DNA"/>
</dbReference>
<dbReference type="PIR" id="D64411">
    <property type="entry name" value="D64411"/>
</dbReference>
<dbReference type="RefSeq" id="WP_010870406.1">
    <property type="nucleotide sequence ID" value="NC_000909.1"/>
</dbReference>
<dbReference type="SMR" id="Q58302"/>
<dbReference type="FunCoup" id="Q58302">
    <property type="interactions" value="2"/>
</dbReference>
<dbReference type="STRING" id="243232.MJ_0892"/>
<dbReference type="PaxDb" id="243232-MJ_0892"/>
<dbReference type="EnsemblBacteria" id="AAB98895">
    <property type="protein sequence ID" value="AAB98895"/>
    <property type="gene ID" value="MJ_0892"/>
</dbReference>
<dbReference type="GeneID" id="1451781"/>
<dbReference type="KEGG" id="mja:MJ_0892"/>
<dbReference type="eggNOG" id="arCOG01829">
    <property type="taxonomic scope" value="Archaea"/>
</dbReference>
<dbReference type="HOGENOM" id="CLU_051124_0_1_2"/>
<dbReference type="InParanoid" id="Q58302"/>
<dbReference type="OrthoDB" id="102632at2157"/>
<dbReference type="PhylomeDB" id="Q58302"/>
<dbReference type="Proteomes" id="UP000000805">
    <property type="component" value="Chromosome"/>
</dbReference>
<dbReference type="GO" id="GO:0097589">
    <property type="term" value="C:archaeal-type flagellum"/>
    <property type="evidence" value="ECO:0007669"/>
    <property type="project" value="UniProtKB-SubCell"/>
</dbReference>
<dbReference type="GO" id="GO:0005198">
    <property type="term" value="F:structural molecule activity"/>
    <property type="evidence" value="ECO:0007669"/>
    <property type="project" value="InterPro"/>
</dbReference>
<dbReference type="GO" id="GO:0097588">
    <property type="term" value="P:archaeal or bacterial-type flagellum-dependent cell motility"/>
    <property type="evidence" value="ECO:0007669"/>
    <property type="project" value="InterPro"/>
</dbReference>
<dbReference type="InterPro" id="IPR013373">
    <property type="entry name" value="Flagellin/pilin_N_arc"/>
</dbReference>
<dbReference type="InterPro" id="IPR002774">
    <property type="entry name" value="Flagellin_arc"/>
</dbReference>
<dbReference type="NCBIfam" id="TIGR02537">
    <property type="entry name" value="arch_flag_Nterm"/>
    <property type="match status" value="1"/>
</dbReference>
<dbReference type="NCBIfam" id="NF006325">
    <property type="entry name" value="PRK08541.1"/>
    <property type="match status" value="1"/>
</dbReference>
<dbReference type="PANTHER" id="PTHR35903">
    <property type="entry name" value="FLAGELLIN B1"/>
    <property type="match status" value="1"/>
</dbReference>
<dbReference type="PANTHER" id="PTHR35903:SF1">
    <property type="entry name" value="FLAGELLIN B1"/>
    <property type="match status" value="1"/>
</dbReference>
<dbReference type="Pfam" id="PF01917">
    <property type="entry name" value="Arch_flagellin"/>
    <property type="match status" value="1"/>
</dbReference>